<keyword id="KW-0687">Ribonucleoprotein</keyword>
<keyword id="KW-0689">Ribosomal protein</keyword>
<protein>
    <recommendedName>
        <fullName evidence="1">Large ribosomal subunit protein bL34</fullName>
    </recommendedName>
    <alternativeName>
        <fullName evidence="2">50S ribosomal protein L34</fullName>
    </alternativeName>
</protein>
<comment type="similarity">
    <text evidence="1">Belongs to the bacterial ribosomal protein bL34 family.</text>
</comment>
<name>RL34_RHOPT</name>
<feature type="chain" id="PRO_1000196097" description="Large ribosomal subunit protein bL34">
    <location>
        <begin position="1"/>
        <end position="44"/>
    </location>
</feature>
<organism>
    <name type="scientific">Rhodopseudomonas palustris (strain TIE-1)</name>
    <dbReference type="NCBI Taxonomy" id="395960"/>
    <lineage>
        <taxon>Bacteria</taxon>
        <taxon>Pseudomonadati</taxon>
        <taxon>Pseudomonadota</taxon>
        <taxon>Alphaproteobacteria</taxon>
        <taxon>Hyphomicrobiales</taxon>
        <taxon>Nitrobacteraceae</taxon>
        <taxon>Rhodopseudomonas</taxon>
    </lineage>
</organism>
<evidence type="ECO:0000255" key="1">
    <source>
        <dbReference type="HAMAP-Rule" id="MF_00391"/>
    </source>
</evidence>
<evidence type="ECO:0000305" key="2"/>
<dbReference type="EMBL" id="CP001096">
    <property type="protein sequence ID" value="ACE99197.1"/>
    <property type="molecule type" value="Genomic_DNA"/>
</dbReference>
<dbReference type="RefSeq" id="WP_006609582.1">
    <property type="nucleotide sequence ID" value="NC_011004.1"/>
</dbReference>
<dbReference type="SMR" id="B3QCI4"/>
<dbReference type="GeneID" id="66891655"/>
<dbReference type="KEGG" id="rpt:Rpal_0638"/>
<dbReference type="HOGENOM" id="CLU_129938_2_0_5"/>
<dbReference type="Proteomes" id="UP000001725">
    <property type="component" value="Chromosome"/>
</dbReference>
<dbReference type="GO" id="GO:1990904">
    <property type="term" value="C:ribonucleoprotein complex"/>
    <property type="evidence" value="ECO:0007669"/>
    <property type="project" value="UniProtKB-KW"/>
</dbReference>
<dbReference type="GO" id="GO:0005840">
    <property type="term" value="C:ribosome"/>
    <property type="evidence" value="ECO:0007669"/>
    <property type="project" value="UniProtKB-KW"/>
</dbReference>
<dbReference type="GO" id="GO:0003735">
    <property type="term" value="F:structural constituent of ribosome"/>
    <property type="evidence" value="ECO:0007669"/>
    <property type="project" value="InterPro"/>
</dbReference>
<dbReference type="GO" id="GO:0006412">
    <property type="term" value="P:translation"/>
    <property type="evidence" value="ECO:0007669"/>
    <property type="project" value="UniProtKB-UniRule"/>
</dbReference>
<dbReference type="FunFam" id="1.10.287.3980:FF:000001">
    <property type="entry name" value="Mitochondrial ribosomal protein L34"/>
    <property type="match status" value="1"/>
</dbReference>
<dbReference type="Gene3D" id="1.10.287.3980">
    <property type="match status" value="1"/>
</dbReference>
<dbReference type="HAMAP" id="MF_00391">
    <property type="entry name" value="Ribosomal_bL34"/>
    <property type="match status" value="1"/>
</dbReference>
<dbReference type="InterPro" id="IPR000271">
    <property type="entry name" value="Ribosomal_bL34"/>
</dbReference>
<dbReference type="InterPro" id="IPR020939">
    <property type="entry name" value="Ribosomal_bL34_CS"/>
</dbReference>
<dbReference type="NCBIfam" id="TIGR01030">
    <property type="entry name" value="rpmH_bact"/>
    <property type="match status" value="1"/>
</dbReference>
<dbReference type="PANTHER" id="PTHR14503:SF4">
    <property type="entry name" value="LARGE RIBOSOMAL SUBUNIT PROTEIN BL34M"/>
    <property type="match status" value="1"/>
</dbReference>
<dbReference type="PANTHER" id="PTHR14503">
    <property type="entry name" value="MITOCHONDRIAL RIBOSOMAL PROTEIN 34 FAMILY MEMBER"/>
    <property type="match status" value="1"/>
</dbReference>
<dbReference type="Pfam" id="PF00468">
    <property type="entry name" value="Ribosomal_L34"/>
    <property type="match status" value="1"/>
</dbReference>
<dbReference type="PROSITE" id="PS00784">
    <property type="entry name" value="RIBOSOMAL_L34"/>
    <property type="match status" value="1"/>
</dbReference>
<gene>
    <name evidence="1" type="primary">rpmH</name>
    <name type="ordered locus">Rpal_0638</name>
</gene>
<reference key="1">
    <citation type="submission" date="2008-05" db="EMBL/GenBank/DDBJ databases">
        <title>Complete sequence of Rhodopseudomonas palustris TIE-1.</title>
        <authorList>
            <consortium name="US DOE Joint Genome Institute"/>
            <person name="Lucas S."/>
            <person name="Copeland A."/>
            <person name="Lapidus A."/>
            <person name="Glavina del Rio T."/>
            <person name="Dalin E."/>
            <person name="Tice H."/>
            <person name="Pitluck S."/>
            <person name="Chain P."/>
            <person name="Malfatti S."/>
            <person name="Shin M."/>
            <person name="Vergez L."/>
            <person name="Lang D."/>
            <person name="Schmutz J."/>
            <person name="Larimer F."/>
            <person name="Land M."/>
            <person name="Hauser L."/>
            <person name="Kyrpides N."/>
            <person name="Mikhailova N."/>
            <person name="Emerson D."/>
            <person name="Newman D.K."/>
            <person name="Roden E."/>
            <person name="Richardson P."/>
        </authorList>
    </citation>
    <scope>NUCLEOTIDE SEQUENCE [LARGE SCALE GENOMIC DNA]</scope>
    <source>
        <strain>TIE-1</strain>
    </source>
</reference>
<accession>B3QCI4</accession>
<proteinExistence type="inferred from homology"/>
<sequence>MKRTYQPSKLVRKRRHGFRARLATTGGRKVLAARRARGRKRLSA</sequence>